<organism>
    <name type="scientific">Escherichia coli (strain 55989 / EAEC)</name>
    <dbReference type="NCBI Taxonomy" id="585055"/>
    <lineage>
        <taxon>Bacteria</taxon>
        <taxon>Pseudomonadati</taxon>
        <taxon>Pseudomonadota</taxon>
        <taxon>Gammaproteobacteria</taxon>
        <taxon>Enterobacterales</taxon>
        <taxon>Enterobacteriaceae</taxon>
        <taxon>Escherichia</taxon>
    </lineage>
</organism>
<feature type="chain" id="PRO_0000369172" description="HTH-type transcriptional regulator EcpR">
    <location>
        <begin position="1"/>
        <end position="196"/>
    </location>
</feature>
<feature type="domain" description="HTH luxR-type" evidence="2">
    <location>
        <begin position="138"/>
        <end position="196"/>
    </location>
</feature>
<feature type="DNA-binding region" description="H-T-H motif" evidence="2">
    <location>
        <begin position="162"/>
        <end position="181"/>
    </location>
</feature>
<sequence length="196" mass="23273">MTWQSDYSRDYEVKNHMECQNRSDKYIWSPHDAYFYKGLSELIVDIDRLIYLSLEKIRKDFVFINLNTDSLSEFINRDNEWLSAVKGKQVVLIAARKSEALANYWYYNSNIRGVVYAGLSRDIRKELAYVINGRFLRKDIKKDKITDREMEIIRMTAQGMQPKSIARIENCSVKTVYTHRRNAEAKLYSKIYKLVQ</sequence>
<proteinExistence type="inferred from homology"/>
<evidence type="ECO:0000250" key="1"/>
<evidence type="ECO:0000255" key="2">
    <source>
        <dbReference type="PROSITE-ProRule" id="PRU00411"/>
    </source>
</evidence>
<evidence type="ECO:0000305" key="3"/>
<gene>
    <name type="primary">ecpR</name>
    <name type="synonym">matA</name>
    <name type="ordered locus">EC55989_0298</name>
</gene>
<dbReference type="EMBL" id="CU928145">
    <property type="protein sequence ID" value="CAU96176.1"/>
    <property type="molecule type" value="Genomic_DNA"/>
</dbReference>
<dbReference type="SMR" id="B7L425"/>
<dbReference type="KEGG" id="eck:EC55989_0298"/>
<dbReference type="HOGENOM" id="CLU_128111_0_0_6"/>
<dbReference type="Proteomes" id="UP000000746">
    <property type="component" value="Chromosome"/>
</dbReference>
<dbReference type="GO" id="GO:0005737">
    <property type="term" value="C:cytoplasm"/>
    <property type="evidence" value="ECO:0007669"/>
    <property type="project" value="UniProtKB-SubCell"/>
</dbReference>
<dbReference type="GO" id="GO:0003677">
    <property type="term" value="F:DNA binding"/>
    <property type="evidence" value="ECO:0007669"/>
    <property type="project" value="UniProtKB-KW"/>
</dbReference>
<dbReference type="GO" id="GO:0006355">
    <property type="term" value="P:regulation of DNA-templated transcription"/>
    <property type="evidence" value="ECO:0007669"/>
    <property type="project" value="InterPro"/>
</dbReference>
<dbReference type="CDD" id="cd06170">
    <property type="entry name" value="LuxR_C_like"/>
    <property type="match status" value="1"/>
</dbReference>
<dbReference type="Gene3D" id="1.10.10.10">
    <property type="entry name" value="Winged helix-like DNA-binding domain superfamily/Winged helix DNA-binding domain"/>
    <property type="match status" value="1"/>
</dbReference>
<dbReference type="InterPro" id="IPR016032">
    <property type="entry name" value="Sig_transdc_resp-reg_C-effctor"/>
</dbReference>
<dbReference type="InterPro" id="IPR000792">
    <property type="entry name" value="Tscrpt_reg_LuxR_C"/>
</dbReference>
<dbReference type="InterPro" id="IPR036388">
    <property type="entry name" value="WH-like_DNA-bd_sf"/>
</dbReference>
<dbReference type="Pfam" id="PF00196">
    <property type="entry name" value="GerE"/>
    <property type="match status" value="1"/>
</dbReference>
<dbReference type="PRINTS" id="PR00038">
    <property type="entry name" value="HTHLUXR"/>
</dbReference>
<dbReference type="SMART" id="SM00421">
    <property type="entry name" value="HTH_LUXR"/>
    <property type="match status" value="1"/>
</dbReference>
<dbReference type="SUPFAM" id="SSF46894">
    <property type="entry name" value="C-terminal effector domain of the bipartite response regulators"/>
    <property type="match status" value="1"/>
</dbReference>
<dbReference type="PROSITE" id="PS50043">
    <property type="entry name" value="HTH_LUXR_2"/>
    <property type="match status" value="1"/>
</dbReference>
<comment type="function">
    <text evidence="1">Part of the ecpRABCDE operon, which encodes the E.coli common pilus (ECP). ECP is found in both commensal and pathogenic strains and plays a dual role in early-stage biofilm development and host cell recognition. Positively regulates the expression of the ecp operon (By similarity).</text>
</comment>
<comment type="subcellular location">
    <subcellularLocation>
        <location evidence="3">Cytoplasm</location>
    </subcellularLocation>
</comment>
<comment type="induction">
    <text evidence="1">Negatively regulated by H-NS. Positively autoregulated. Also positively regulated by IHF (By similarity).</text>
</comment>
<comment type="similarity">
    <text evidence="3">Belongs to the EcpR/MatA family.</text>
</comment>
<reference key="1">
    <citation type="journal article" date="2009" name="PLoS Genet.">
        <title>Organised genome dynamics in the Escherichia coli species results in highly diverse adaptive paths.</title>
        <authorList>
            <person name="Touchon M."/>
            <person name="Hoede C."/>
            <person name="Tenaillon O."/>
            <person name="Barbe V."/>
            <person name="Baeriswyl S."/>
            <person name="Bidet P."/>
            <person name="Bingen E."/>
            <person name="Bonacorsi S."/>
            <person name="Bouchier C."/>
            <person name="Bouvet O."/>
            <person name="Calteau A."/>
            <person name="Chiapello H."/>
            <person name="Clermont O."/>
            <person name="Cruveiller S."/>
            <person name="Danchin A."/>
            <person name="Diard M."/>
            <person name="Dossat C."/>
            <person name="Karoui M.E."/>
            <person name="Frapy E."/>
            <person name="Garry L."/>
            <person name="Ghigo J.M."/>
            <person name="Gilles A.M."/>
            <person name="Johnson J."/>
            <person name="Le Bouguenec C."/>
            <person name="Lescat M."/>
            <person name="Mangenot S."/>
            <person name="Martinez-Jehanne V."/>
            <person name="Matic I."/>
            <person name="Nassif X."/>
            <person name="Oztas S."/>
            <person name="Petit M.A."/>
            <person name="Pichon C."/>
            <person name="Rouy Z."/>
            <person name="Ruf C.S."/>
            <person name="Schneider D."/>
            <person name="Tourret J."/>
            <person name="Vacherie B."/>
            <person name="Vallenet D."/>
            <person name="Medigue C."/>
            <person name="Rocha E.P.C."/>
            <person name="Denamur E."/>
        </authorList>
    </citation>
    <scope>NUCLEOTIDE SEQUENCE [LARGE SCALE GENOMIC DNA]</scope>
    <source>
        <strain>55989 / EAEC</strain>
    </source>
</reference>
<keyword id="KW-0010">Activator</keyword>
<keyword id="KW-0963">Cytoplasm</keyword>
<keyword id="KW-0238">DNA-binding</keyword>
<keyword id="KW-1185">Reference proteome</keyword>
<keyword id="KW-0804">Transcription</keyword>
<keyword id="KW-0805">Transcription regulation</keyword>
<protein>
    <recommendedName>
        <fullName>HTH-type transcriptional regulator EcpR</fullName>
    </recommendedName>
</protein>
<accession>B7L425</accession>
<name>ECPR_ECO55</name>